<keyword id="KW-0067">ATP-binding</keyword>
<keyword id="KW-0131">Cell cycle</keyword>
<keyword id="KW-0132">Cell division</keyword>
<keyword id="KW-0133">Cell shape</keyword>
<keyword id="KW-0961">Cell wall biogenesis/degradation</keyword>
<keyword id="KW-0963">Cytoplasm</keyword>
<keyword id="KW-0436">Ligase</keyword>
<keyword id="KW-0547">Nucleotide-binding</keyword>
<keyword id="KW-0573">Peptidoglycan synthesis</keyword>
<comment type="function">
    <text evidence="1">Catalyzes the addition of an amino acid to the nucleotide precursor UDP-N-acetylmuramoyl-L-alanyl-D-glutamate (UMAG) in the biosynthesis of bacterial cell-wall peptidoglycan.</text>
</comment>
<comment type="pathway">
    <text evidence="1">Cell wall biogenesis; peptidoglycan biosynthesis.</text>
</comment>
<comment type="subcellular location">
    <subcellularLocation>
        <location evidence="1">Cytoplasm</location>
    </subcellularLocation>
</comment>
<comment type="PTM">
    <text evidence="1">Carboxylation is probably crucial for Mg(2+) binding and, consequently, for the gamma-phosphate positioning of ATP.</text>
</comment>
<comment type="similarity">
    <text evidence="1">Belongs to the MurCDEF family. MurE subfamily.</text>
</comment>
<sequence length="483" mass="54128">MIKLEQVVEILKKDNNFREISSAGEYYFNWPKEVNFDQLSYDSRKSTKDTLFFAKGLNFKKEYLTDLEAAFYVSEFDYEVALPAIIVTDVKRAMALIAANFYKFPQNKLKTLALTGTKGKTTSAYFAKSILDKMNGGKTALLSTAQTTLDGQNYFKSELTTPESLDLLEMMAKALENGMTHLVMEVSSQAYKTERVYGLTFDVGVFLNISPDHIGPVEHPTLEDYFYCKRQLLKNSRYFVANAEMNHFAIIKEELNERKIPHAFYGADSENKIIESKGLHFVTDGSVSGEFDIRLLGRFNQENALATALATKALGASFENIRQGLASAIVPGRMELLTAKNGAHIYIDYAHNGLSLENLVEVVEDHHAGQLFLVLGSTGNKGESRRKDFGQVIENHPRLNVILTTDDSNRENPKTIADEIASFVSRELDFELDREFAIKKAISKTQNSDDAVIIAGKGADMFQLKDGKREPYIGDSPAAQKYL</sequence>
<protein>
    <recommendedName>
        <fullName evidence="1">UDP-N-acetylmuramyl-tripeptide synthetase</fullName>
        <ecNumber evidence="1">6.3.2.-</ecNumber>
    </recommendedName>
    <alternativeName>
        <fullName evidence="1">UDP-MurNAc-tripeptide synthetase</fullName>
    </alternativeName>
</protein>
<gene>
    <name evidence="1" type="primary">murE</name>
    <name type="ordered locus">LACR_1987</name>
</gene>
<dbReference type="EC" id="6.3.2.-" evidence="1"/>
<dbReference type="EMBL" id="CP000425">
    <property type="protein sequence ID" value="ABJ73469.1"/>
    <property type="molecule type" value="Genomic_DNA"/>
</dbReference>
<dbReference type="RefSeq" id="WP_011676813.1">
    <property type="nucleotide sequence ID" value="NC_008527.1"/>
</dbReference>
<dbReference type="SMR" id="Q02X53"/>
<dbReference type="KEGG" id="llc:LACR_1987"/>
<dbReference type="HOGENOM" id="CLU_022291_4_2_9"/>
<dbReference type="UniPathway" id="UPA00219"/>
<dbReference type="Proteomes" id="UP000000240">
    <property type="component" value="Chromosome"/>
</dbReference>
<dbReference type="GO" id="GO:0005737">
    <property type="term" value="C:cytoplasm"/>
    <property type="evidence" value="ECO:0007669"/>
    <property type="project" value="UniProtKB-SubCell"/>
</dbReference>
<dbReference type="GO" id="GO:0016881">
    <property type="term" value="F:acid-amino acid ligase activity"/>
    <property type="evidence" value="ECO:0007669"/>
    <property type="project" value="UniProtKB-UniRule"/>
</dbReference>
<dbReference type="GO" id="GO:0005524">
    <property type="term" value="F:ATP binding"/>
    <property type="evidence" value="ECO:0007669"/>
    <property type="project" value="UniProtKB-UniRule"/>
</dbReference>
<dbReference type="GO" id="GO:0000287">
    <property type="term" value="F:magnesium ion binding"/>
    <property type="evidence" value="ECO:0007669"/>
    <property type="project" value="UniProtKB-UniRule"/>
</dbReference>
<dbReference type="GO" id="GO:0051301">
    <property type="term" value="P:cell division"/>
    <property type="evidence" value="ECO:0007669"/>
    <property type="project" value="UniProtKB-KW"/>
</dbReference>
<dbReference type="GO" id="GO:0071555">
    <property type="term" value="P:cell wall organization"/>
    <property type="evidence" value="ECO:0007669"/>
    <property type="project" value="UniProtKB-KW"/>
</dbReference>
<dbReference type="GO" id="GO:0009252">
    <property type="term" value="P:peptidoglycan biosynthetic process"/>
    <property type="evidence" value="ECO:0007669"/>
    <property type="project" value="UniProtKB-UniRule"/>
</dbReference>
<dbReference type="GO" id="GO:0008360">
    <property type="term" value="P:regulation of cell shape"/>
    <property type="evidence" value="ECO:0007669"/>
    <property type="project" value="UniProtKB-KW"/>
</dbReference>
<dbReference type="Gene3D" id="3.90.190.20">
    <property type="entry name" value="Mur ligase, C-terminal domain"/>
    <property type="match status" value="1"/>
</dbReference>
<dbReference type="Gene3D" id="3.40.1190.10">
    <property type="entry name" value="Mur-like, catalytic domain"/>
    <property type="match status" value="1"/>
</dbReference>
<dbReference type="Gene3D" id="3.40.1390.10">
    <property type="entry name" value="MurE/MurF, N-terminal domain"/>
    <property type="match status" value="1"/>
</dbReference>
<dbReference type="HAMAP" id="MF_00208">
    <property type="entry name" value="MurE"/>
    <property type="match status" value="1"/>
</dbReference>
<dbReference type="InterPro" id="IPR036565">
    <property type="entry name" value="Mur-like_cat_sf"/>
</dbReference>
<dbReference type="InterPro" id="IPR004101">
    <property type="entry name" value="Mur_ligase_C"/>
</dbReference>
<dbReference type="InterPro" id="IPR036615">
    <property type="entry name" value="Mur_ligase_C_dom_sf"/>
</dbReference>
<dbReference type="InterPro" id="IPR013221">
    <property type="entry name" value="Mur_ligase_cen"/>
</dbReference>
<dbReference type="InterPro" id="IPR035911">
    <property type="entry name" value="MurE/MurF_N"/>
</dbReference>
<dbReference type="InterPro" id="IPR005761">
    <property type="entry name" value="UDP-N-AcMur-Glu-dNH2Pim_ligase"/>
</dbReference>
<dbReference type="NCBIfam" id="TIGR01085">
    <property type="entry name" value="murE"/>
    <property type="match status" value="1"/>
</dbReference>
<dbReference type="NCBIfam" id="NF001131">
    <property type="entry name" value="PRK00139.2-5"/>
    <property type="match status" value="1"/>
</dbReference>
<dbReference type="NCBIfam" id="NF010628">
    <property type="entry name" value="PRK14022.1"/>
    <property type="match status" value="1"/>
</dbReference>
<dbReference type="PANTHER" id="PTHR23135">
    <property type="entry name" value="MUR LIGASE FAMILY MEMBER"/>
    <property type="match status" value="1"/>
</dbReference>
<dbReference type="PANTHER" id="PTHR23135:SF4">
    <property type="entry name" value="UDP-N-ACETYLMURAMOYL-L-ALANYL-D-GLUTAMATE--2,6-DIAMINOPIMELATE LIGASE MURE HOMOLOG, CHLOROPLASTIC"/>
    <property type="match status" value="1"/>
</dbReference>
<dbReference type="Pfam" id="PF02875">
    <property type="entry name" value="Mur_ligase_C"/>
    <property type="match status" value="1"/>
</dbReference>
<dbReference type="Pfam" id="PF08245">
    <property type="entry name" value="Mur_ligase_M"/>
    <property type="match status" value="1"/>
</dbReference>
<dbReference type="SUPFAM" id="SSF53623">
    <property type="entry name" value="MurD-like peptide ligases, catalytic domain"/>
    <property type="match status" value="1"/>
</dbReference>
<dbReference type="SUPFAM" id="SSF53244">
    <property type="entry name" value="MurD-like peptide ligases, peptide-binding domain"/>
    <property type="match status" value="1"/>
</dbReference>
<dbReference type="SUPFAM" id="SSF63418">
    <property type="entry name" value="MurE/MurF N-terminal domain"/>
    <property type="match status" value="1"/>
</dbReference>
<accession>Q02X53</accession>
<organism>
    <name type="scientific">Lactococcus lactis subsp. cremoris (strain SK11)</name>
    <dbReference type="NCBI Taxonomy" id="272622"/>
    <lineage>
        <taxon>Bacteria</taxon>
        <taxon>Bacillati</taxon>
        <taxon>Bacillota</taxon>
        <taxon>Bacilli</taxon>
        <taxon>Lactobacillales</taxon>
        <taxon>Streptococcaceae</taxon>
        <taxon>Lactococcus</taxon>
        <taxon>Lactococcus cremoris subsp. cremoris</taxon>
    </lineage>
</organism>
<proteinExistence type="inferred from homology"/>
<feature type="chain" id="PRO_1000012366" description="UDP-N-acetylmuramyl-tripeptide synthetase">
    <location>
        <begin position="1"/>
        <end position="483"/>
    </location>
</feature>
<feature type="binding site" evidence="1">
    <location>
        <position position="43"/>
    </location>
    <ligand>
        <name>UDP-N-acetyl-alpha-D-muramoyl-L-alanyl-D-glutamate</name>
        <dbReference type="ChEBI" id="CHEBI:83900"/>
    </ligand>
</feature>
<feature type="binding site" evidence="1">
    <location>
        <begin position="116"/>
        <end position="122"/>
    </location>
    <ligand>
        <name>ATP</name>
        <dbReference type="ChEBI" id="CHEBI:30616"/>
    </ligand>
</feature>
<feature type="binding site" evidence="1">
    <location>
        <begin position="160"/>
        <end position="161"/>
    </location>
    <ligand>
        <name>UDP-N-acetyl-alpha-D-muramoyl-L-alanyl-D-glutamate</name>
        <dbReference type="ChEBI" id="CHEBI:83900"/>
    </ligand>
</feature>
<feature type="binding site" evidence="1">
    <location>
        <position position="187"/>
    </location>
    <ligand>
        <name>UDP-N-acetyl-alpha-D-muramoyl-L-alanyl-D-glutamate</name>
        <dbReference type="ChEBI" id="CHEBI:83900"/>
    </ligand>
</feature>
<feature type="binding site" evidence="1">
    <location>
        <position position="195"/>
    </location>
    <ligand>
        <name>UDP-N-acetyl-alpha-D-muramoyl-L-alanyl-D-glutamate</name>
        <dbReference type="ChEBI" id="CHEBI:83900"/>
    </ligand>
</feature>
<feature type="modified residue" description="N6-carboxylysine" evidence="1">
    <location>
        <position position="229"/>
    </location>
</feature>
<name>MURE_LACLS</name>
<reference key="1">
    <citation type="journal article" date="2006" name="Proc. Natl. Acad. Sci. U.S.A.">
        <title>Comparative genomics of the lactic acid bacteria.</title>
        <authorList>
            <person name="Makarova K.S."/>
            <person name="Slesarev A."/>
            <person name="Wolf Y.I."/>
            <person name="Sorokin A."/>
            <person name="Mirkin B."/>
            <person name="Koonin E.V."/>
            <person name="Pavlov A."/>
            <person name="Pavlova N."/>
            <person name="Karamychev V."/>
            <person name="Polouchine N."/>
            <person name="Shakhova V."/>
            <person name="Grigoriev I."/>
            <person name="Lou Y."/>
            <person name="Rohksar D."/>
            <person name="Lucas S."/>
            <person name="Huang K."/>
            <person name="Goodstein D.M."/>
            <person name="Hawkins T."/>
            <person name="Plengvidhya V."/>
            <person name="Welker D."/>
            <person name="Hughes J."/>
            <person name="Goh Y."/>
            <person name="Benson A."/>
            <person name="Baldwin K."/>
            <person name="Lee J.-H."/>
            <person name="Diaz-Muniz I."/>
            <person name="Dosti B."/>
            <person name="Smeianov V."/>
            <person name="Wechter W."/>
            <person name="Barabote R."/>
            <person name="Lorca G."/>
            <person name="Altermann E."/>
            <person name="Barrangou R."/>
            <person name="Ganesan B."/>
            <person name="Xie Y."/>
            <person name="Rawsthorne H."/>
            <person name="Tamir D."/>
            <person name="Parker C."/>
            <person name="Breidt F."/>
            <person name="Broadbent J.R."/>
            <person name="Hutkins R."/>
            <person name="O'Sullivan D."/>
            <person name="Steele J."/>
            <person name="Unlu G."/>
            <person name="Saier M.H. Jr."/>
            <person name="Klaenhammer T."/>
            <person name="Richardson P."/>
            <person name="Kozyavkin S."/>
            <person name="Weimer B.C."/>
            <person name="Mills D.A."/>
        </authorList>
    </citation>
    <scope>NUCLEOTIDE SEQUENCE [LARGE SCALE GENOMIC DNA]</scope>
    <source>
        <strain>SK11</strain>
    </source>
</reference>
<evidence type="ECO:0000255" key="1">
    <source>
        <dbReference type="HAMAP-Rule" id="MF_00208"/>
    </source>
</evidence>